<reference key="1">
    <citation type="journal article" date="2004" name="Science">
        <title>The 1.2-megabase genome sequence of Mimivirus.</title>
        <authorList>
            <person name="Raoult D."/>
            <person name="Audic S."/>
            <person name="Robert C."/>
            <person name="Abergel C."/>
            <person name="Renesto P."/>
            <person name="Ogata H."/>
            <person name="La Scola B."/>
            <person name="Susan M."/>
            <person name="Claverie J.-M."/>
        </authorList>
    </citation>
    <scope>NUCLEOTIDE SEQUENCE [LARGE SCALE GENOMIC DNA]</scope>
    <source>
        <strain>Rowbotham-Bradford</strain>
    </source>
</reference>
<reference key="2">
    <citation type="journal article" date="2006" name="J. Virol.">
        <title>Mimivirus giant particles incorporate a large fraction of anonymous and unique gene products.</title>
        <authorList>
            <person name="Renesto P."/>
            <person name="Abergel C."/>
            <person name="Decloquement P."/>
            <person name="Moinier D."/>
            <person name="Azza S."/>
            <person name="Ogata H."/>
            <person name="Fourquet P."/>
            <person name="Gorvel J.-P."/>
            <person name="Claverie J.-M."/>
            <person name="Raoult D."/>
        </authorList>
    </citation>
    <scope>IDENTIFICATION BY MASS SPECTROMETRY [LARGE SCALE ANALYSIS]</scope>
    <scope>SUBCELLULAR LOCATION</scope>
</reference>
<proteinExistence type="evidence at protein level"/>
<accession>Q5UR35</accession>
<sequence length="518" mass="56724">MDYKQEYLKLKQLLLNQRGSGKMNPLLLNNLSSMVFIVGNNILGDDVKAVIISLIEEFNRIASQDLRHNIELSQYYAVGRGLMTREGTIQCENCELVLKYTHSSVCLSNGRIVRKTSGDNEVNCQVSRGMVKFYIKQKTGDQYRYTRIRIARVQQKGSLAPFTDALYLNNDELDKLHEDTGAAISLSHSDLAKQSASRGDLKVKSPSDVAIATKNINKNVDQINRAATESQLGLMNRSRVVSPVPTQTSVNVANTVARNMSIGDKNSAIMVPNNPISLDSSDDVQPVIGAVDERGIELQHVGNGGPVSQSNTLNSKIPVTSAQIPIDANIAVVPSAGLGTSETITGPSKKSTTSVYNKLSQSVSNAFHTDKAQDKVTDKISKETLKQDETGIASSLGKETKNFFGNLWNKAGDTADKMTNWLRNLGSKSTVVPVSKDLSVVTPLPPQKAGFVPVPTNDDSNTNYLQNKVYTNNPPIDMQYSQNAISTVRNGKTNLSLVEHTQDRQSSTRLNPRYNVMY</sequence>
<gene>
    <name type="ordered locus">MIMI_R553</name>
</gene>
<organismHost>
    <name type="scientific">Acanthamoeba polyphaga</name>
    <name type="common">Amoeba</name>
    <dbReference type="NCBI Taxonomy" id="5757"/>
</organismHost>
<organism>
    <name type="scientific">Acanthamoeba polyphaga mimivirus</name>
    <name type="common">APMV</name>
    <dbReference type="NCBI Taxonomy" id="212035"/>
    <lineage>
        <taxon>Viruses</taxon>
        <taxon>Varidnaviria</taxon>
        <taxon>Bamfordvirae</taxon>
        <taxon>Nucleocytoviricota</taxon>
        <taxon>Megaviricetes</taxon>
        <taxon>Imitervirales</taxon>
        <taxon>Mimiviridae</taxon>
        <taxon>Megamimivirinae</taxon>
        <taxon>Mimivirus</taxon>
        <taxon>Mimivirus bradfordmassiliense</taxon>
    </lineage>
</organism>
<dbReference type="EMBL" id="AY653733">
    <property type="protein sequence ID" value="AAV50817.1"/>
    <property type="molecule type" value="Genomic_DNA"/>
</dbReference>
<dbReference type="KEGG" id="vg:9925188"/>
<dbReference type="OrthoDB" id="13652at10239"/>
<dbReference type="Proteomes" id="UP000001134">
    <property type="component" value="Genome"/>
</dbReference>
<dbReference type="GO" id="GO:0044423">
    <property type="term" value="C:virion component"/>
    <property type="evidence" value="ECO:0007669"/>
    <property type="project" value="UniProtKB-KW"/>
</dbReference>
<evidence type="ECO:0000269" key="1">
    <source>
    </source>
</evidence>
<name>YR553_MIMIV</name>
<feature type="chain" id="PRO_0000244048" description="Uncharacterized protein R553">
    <location>
        <begin position="1"/>
        <end position="518"/>
    </location>
</feature>
<keyword id="KW-1185">Reference proteome</keyword>
<keyword id="KW-0946">Virion</keyword>
<protein>
    <recommendedName>
        <fullName>Uncharacterized protein R553</fullName>
    </recommendedName>
</protein>
<comment type="subcellular location">
    <subcellularLocation>
        <location evidence="1">Virion</location>
    </subcellularLocation>
</comment>